<evidence type="ECO:0000250" key="1"/>
<evidence type="ECO:0000255" key="2"/>
<evidence type="ECO:0000255" key="3">
    <source>
        <dbReference type="PROSITE-ProRule" id="PRU01097"/>
    </source>
</evidence>
<evidence type="ECO:0000255" key="4">
    <source>
        <dbReference type="PROSITE-ProRule" id="PRU10062"/>
    </source>
</evidence>
<evidence type="ECO:0000269" key="5">
    <source>
    </source>
</evidence>
<evidence type="ECO:0000305" key="6"/>
<dbReference type="EC" id="3.2.1.8"/>
<dbReference type="EMBL" id="AB053298">
    <property type="protein sequence ID" value="BAB69655.1"/>
    <property type="molecule type" value="Genomic_DNA"/>
</dbReference>
<dbReference type="SMR" id="Q96TR7"/>
<dbReference type="CAZy" id="GH11">
    <property type="family name" value="Glycoside Hydrolase Family 11"/>
</dbReference>
<dbReference type="UniPathway" id="UPA00114"/>
<dbReference type="GO" id="GO:0005576">
    <property type="term" value="C:extracellular region"/>
    <property type="evidence" value="ECO:0007669"/>
    <property type="project" value="UniProtKB-SubCell"/>
</dbReference>
<dbReference type="GO" id="GO:0031176">
    <property type="term" value="F:endo-1,4-beta-xylanase activity"/>
    <property type="evidence" value="ECO:0007669"/>
    <property type="project" value="UniProtKB-EC"/>
</dbReference>
<dbReference type="GO" id="GO:0045493">
    <property type="term" value="P:xylan catabolic process"/>
    <property type="evidence" value="ECO:0007669"/>
    <property type="project" value="UniProtKB-UniPathway"/>
</dbReference>
<dbReference type="FunFam" id="2.60.120.180:FF:000002">
    <property type="entry name" value="Endo-1,4-beta-xylanase A"/>
    <property type="match status" value="1"/>
</dbReference>
<dbReference type="Gene3D" id="2.60.120.180">
    <property type="match status" value="1"/>
</dbReference>
<dbReference type="InterPro" id="IPR013320">
    <property type="entry name" value="ConA-like_dom_sf"/>
</dbReference>
<dbReference type="InterPro" id="IPR013319">
    <property type="entry name" value="GH11/12"/>
</dbReference>
<dbReference type="InterPro" id="IPR018208">
    <property type="entry name" value="GH11_AS_1"/>
</dbReference>
<dbReference type="InterPro" id="IPR033123">
    <property type="entry name" value="GH11_dom"/>
</dbReference>
<dbReference type="InterPro" id="IPR001137">
    <property type="entry name" value="Glyco_hydro_11"/>
</dbReference>
<dbReference type="PANTHER" id="PTHR46828">
    <property type="entry name" value="ENDO-1,4-BETA-XYLANASE A-RELATED"/>
    <property type="match status" value="1"/>
</dbReference>
<dbReference type="PANTHER" id="PTHR46828:SF2">
    <property type="entry name" value="ENDO-1,4-BETA-XYLANASE A-RELATED"/>
    <property type="match status" value="1"/>
</dbReference>
<dbReference type="Pfam" id="PF00457">
    <property type="entry name" value="Glyco_hydro_11"/>
    <property type="match status" value="1"/>
</dbReference>
<dbReference type="PRINTS" id="PR00911">
    <property type="entry name" value="GLHYDRLASE11"/>
</dbReference>
<dbReference type="SUPFAM" id="SSF49899">
    <property type="entry name" value="Concanavalin A-like lectins/glucanases"/>
    <property type="match status" value="1"/>
</dbReference>
<dbReference type="PROSITE" id="PS00776">
    <property type="entry name" value="GH11_1"/>
    <property type="match status" value="1"/>
</dbReference>
<dbReference type="PROSITE" id="PS51761">
    <property type="entry name" value="GH11_3"/>
    <property type="match status" value="1"/>
</dbReference>
<organism>
    <name type="scientific">Aureobasidium pullulans</name>
    <name type="common">Black yeast</name>
    <name type="synonym">Pullularia pullulans</name>
    <dbReference type="NCBI Taxonomy" id="5580"/>
    <lineage>
        <taxon>Eukaryota</taxon>
        <taxon>Fungi</taxon>
        <taxon>Dikarya</taxon>
        <taxon>Ascomycota</taxon>
        <taxon>Pezizomycotina</taxon>
        <taxon>Dothideomycetes</taxon>
        <taxon>Dothideomycetidae</taxon>
        <taxon>Dothideales</taxon>
        <taxon>Saccotheciaceae</taxon>
        <taxon>Aureobasidium</taxon>
    </lineage>
</organism>
<accession>Q96TR7</accession>
<reference key="1">
    <citation type="journal article" date="2001" name="J. Biosci. Bioeng.">
        <title>Purification and characterization of an acidophilic xylanase from Aureobasidium pullulans var. melanigenum and sequence analysis of the encoding gene.</title>
        <authorList>
            <person name="Ohta K."/>
            <person name="Moriyama S."/>
            <person name="Tanaka H."/>
            <person name="Shige T."/>
            <person name="Akimoto H."/>
        </authorList>
    </citation>
    <scope>NUCLEOTIDE SEQUENCE [GENOMIC DNA]</scope>
    <scope>SUBCELLULAR LOCATION</scope>
    <scope>CATALYTIC ACTIVITY</scope>
    <scope>BIOPHYSICOCHEMICAL PROPERTIES</scope>
    <source>
        <strain>ATCC 20524</strain>
    </source>
</reference>
<comment type="function">
    <text>Endo-1,4-beta-xylanase involved in the hydrolysis of xylan, a major structural heterogeneous polysaccharide found in plant biomass representing the second most abundant polysaccharide in the biosphere, after cellulose. Hydrolyzes xylans from oat spelt and birchwood at similar rates, but it has no detectable activity toward Avicel or carboxymethyl cellulose.</text>
</comment>
<comment type="catalytic activity">
    <reaction evidence="5">
        <text>Endohydrolysis of (1-&gt;4)-beta-D-xylosidic linkages in xylans.</text>
        <dbReference type="EC" id="3.2.1.8"/>
    </reaction>
</comment>
<comment type="biophysicochemical properties">
    <phDependence>
        <text evidence="5">Optimum pH is 2.0.</text>
    </phDependence>
    <temperatureDependence>
        <text evidence="5">Optimum temperature is 50 degrees Celsius.</text>
    </temperatureDependence>
</comment>
<comment type="pathway">
    <text>Glycan degradation; xylan degradation.</text>
</comment>
<comment type="subcellular location">
    <subcellularLocation>
        <location evidence="5">Secreted</location>
    </subcellularLocation>
</comment>
<comment type="similarity">
    <text evidence="6">Belongs to the glycosyl hydrolase 11 (cellulase G) family.</text>
</comment>
<name>XYN1_AURPU</name>
<keyword id="KW-0119">Carbohydrate metabolism</keyword>
<keyword id="KW-0326">Glycosidase</keyword>
<keyword id="KW-0378">Hydrolase</keyword>
<keyword id="KW-0624">Polysaccharide degradation</keyword>
<keyword id="KW-0964">Secreted</keyword>
<keyword id="KW-0732">Signal</keyword>
<keyword id="KW-0858">Xylan degradation</keyword>
<gene>
    <name type="primary">xynI</name>
</gene>
<protein>
    <recommendedName>
        <fullName>Endo-1,4-beta-xylanase 1</fullName>
        <shortName>Xylanase 1</shortName>
        <ecNumber>3.2.1.8</ecNumber>
    </recommendedName>
    <alternativeName>
        <fullName>1,4-beta-D-xylan xylanohydrolase 1</fullName>
    </alternativeName>
</protein>
<proteinExistence type="evidence at protein level"/>
<sequence>MKFFATIAALVVAAVAAPVAEADAEASSPMLIERAGPGGINYVQNYNGNLGQFTYNENAGTYSMYWTNGVSGDFVVGLGWSTGAARSITYSSSYTASGGSYLSVYGWINSPQAEYYIVESYGSYNPCGAGQSGVTQLGTVVSDGATYTVCTDERVNEPSITGTSTFKQYWSVRQTKRTSGTVTTGNHFAYWAKYGFGNSYNFQVMAVEAFSGTGSASVTVS</sequence>
<feature type="signal peptide" evidence="2">
    <location>
        <begin position="1"/>
        <end position="22"/>
    </location>
</feature>
<feature type="chain" id="PRO_5000049676" description="Endo-1,4-beta-xylanase 1">
    <location>
        <begin position="23"/>
        <end position="221"/>
    </location>
</feature>
<feature type="domain" description="GH11" evidence="3">
    <location>
        <begin position="29"/>
        <end position="221"/>
    </location>
</feature>
<feature type="active site" description="Nucleophile" evidence="4">
    <location>
        <position position="114"/>
    </location>
</feature>
<feature type="active site" description="Proton donor" evidence="1">
    <location>
        <position position="208"/>
    </location>
</feature>